<reference key="1">
    <citation type="journal article" date="2004" name="Nat. Genet.">
        <title>Complete sequencing and characterization of 21,243 full-length human cDNAs.</title>
        <authorList>
            <person name="Ota T."/>
            <person name="Suzuki Y."/>
            <person name="Nishikawa T."/>
            <person name="Otsuki T."/>
            <person name="Sugiyama T."/>
            <person name="Irie R."/>
            <person name="Wakamatsu A."/>
            <person name="Hayashi K."/>
            <person name="Sato H."/>
            <person name="Nagai K."/>
            <person name="Kimura K."/>
            <person name="Makita H."/>
            <person name="Sekine M."/>
            <person name="Obayashi M."/>
            <person name="Nishi T."/>
            <person name="Shibahara T."/>
            <person name="Tanaka T."/>
            <person name="Ishii S."/>
            <person name="Yamamoto J."/>
            <person name="Saito K."/>
            <person name="Kawai Y."/>
            <person name="Isono Y."/>
            <person name="Nakamura Y."/>
            <person name="Nagahari K."/>
            <person name="Murakami K."/>
            <person name="Yasuda T."/>
            <person name="Iwayanagi T."/>
            <person name="Wagatsuma M."/>
            <person name="Shiratori A."/>
            <person name="Sudo H."/>
            <person name="Hosoiri T."/>
            <person name="Kaku Y."/>
            <person name="Kodaira H."/>
            <person name="Kondo H."/>
            <person name="Sugawara M."/>
            <person name="Takahashi M."/>
            <person name="Kanda K."/>
            <person name="Yokoi T."/>
            <person name="Furuya T."/>
            <person name="Kikkawa E."/>
            <person name="Omura Y."/>
            <person name="Abe K."/>
            <person name="Kamihara K."/>
            <person name="Katsuta N."/>
            <person name="Sato K."/>
            <person name="Tanikawa M."/>
            <person name="Yamazaki M."/>
            <person name="Ninomiya K."/>
            <person name="Ishibashi T."/>
            <person name="Yamashita H."/>
            <person name="Murakawa K."/>
            <person name="Fujimori K."/>
            <person name="Tanai H."/>
            <person name="Kimata M."/>
            <person name="Watanabe M."/>
            <person name="Hiraoka S."/>
            <person name="Chiba Y."/>
            <person name="Ishida S."/>
            <person name="Ono Y."/>
            <person name="Takiguchi S."/>
            <person name="Watanabe S."/>
            <person name="Yosida M."/>
            <person name="Hotuta T."/>
            <person name="Kusano J."/>
            <person name="Kanehori K."/>
            <person name="Takahashi-Fujii A."/>
            <person name="Hara H."/>
            <person name="Tanase T.-O."/>
            <person name="Nomura Y."/>
            <person name="Togiya S."/>
            <person name="Komai F."/>
            <person name="Hara R."/>
            <person name="Takeuchi K."/>
            <person name="Arita M."/>
            <person name="Imose N."/>
            <person name="Musashino K."/>
            <person name="Yuuki H."/>
            <person name="Oshima A."/>
            <person name="Sasaki N."/>
            <person name="Aotsuka S."/>
            <person name="Yoshikawa Y."/>
            <person name="Matsunawa H."/>
            <person name="Ichihara T."/>
            <person name="Shiohata N."/>
            <person name="Sano S."/>
            <person name="Moriya S."/>
            <person name="Momiyama H."/>
            <person name="Satoh N."/>
            <person name="Takami S."/>
            <person name="Terashima Y."/>
            <person name="Suzuki O."/>
            <person name="Nakagawa S."/>
            <person name="Senoh A."/>
            <person name="Mizoguchi H."/>
            <person name="Goto Y."/>
            <person name="Shimizu F."/>
            <person name="Wakebe H."/>
            <person name="Hishigaki H."/>
            <person name="Watanabe T."/>
            <person name="Sugiyama A."/>
            <person name="Takemoto M."/>
            <person name="Kawakami B."/>
            <person name="Yamazaki M."/>
            <person name="Watanabe K."/>
            <person name="Kumagai A."/>
            <person name="Itakura S."/>
            <person name="Fukuzumi Y."/>
            <person name="Fujimori Y."/>
            <person name="Komiyama M."/>
            <person name="Tashiro H."/>
            <person name="Tanigami A."/>
            <person name="Fujiwara T."/>
            <person name="Ono T."/>
            <person name="Yamada K."/>
            <person name="Fujii Y."/>
            <person name="Ozaki K."/>
            <person name="Hirao M."/>
            <person name="Ohmori Y."/>
            <person name="Kawabata A."/>
            <person name="Hikiji T."/>
            <person name="Kobatake N."/>
            <person name="Inagaki H."/>
            <person name="Ikema Y."/>
            <person name="Okamoto S."/>
            <person name="Okitani R."/>
            <person name="Kawakami T."/>
            <person name="Noguchi S."/>
            <person name="Itoh T."/>
            <person name="Shigeta K."/>
            <person name="Senba T."/>
            <person name="Matsumura K."/>
            <person name="Nakajima Y."/>
            <person name="Mizuno T."/>
            <person name="Morinaga M."/>
            <person name="Sasaki M."/>
            <person name="Togashi T."/>
            <person name="Oyama M."/>
            <person name="Hata H."/>
            <person name="Watanabe M."/>
            <person name="Komatsu T."/>
            <person name="Mizushima-Sugano J."/>
            <person name="Satoh T."/>
            <person name="Shirai Y."/>
            <person name="Takahashi Y."/>
            <person name="Nakagawa K."/>
            <person name="Okumura K."/>
            <person name="Nagase T."/>
            <person name="Nomura N."/>
            <person name="Kikuchi H."/>
            <person name="Masuho Y."/>
            <person name="Yamashita R."/>
            <person name="Nakai K."/>
            <person name="Yada T."/>
            <person name="Nakamura Y."/>
            <person name="Ohara O."/>
            <person name="Isogai T."/>
            <person name="Sugano S."/>
        </authorList>
    </citation>
    <scope>NUCLEOTIDE SEQUENCE [LARGE SCALE MRNA] (ISOFORM 1)</scope>
    <scope>VARIANT GLN-237</scope>
    <source>
        <tissue>Testis</tissue>
    </source>
</reference>
<reference key="2">
    <citation type="journal article" date="2004" name="Nature">
        <title>The DNA sequence and comparative analysis of human chromosome 10.</title>
        <authorList>
            <person name="Deloukas P."/>
            <person name="Earthrowl M.E."/>
            <person name="Grafham D.V."/>
            <person name="Rubenfield M."/>
            <person name="French L."/>
            <person name="Steward C.A."/>
            <person name="Sims S.K."/>
            <person name="Jones M.C."/>
            <person name="Searle S."/>
            <person name="Scott C."/>
            <person name="Howe K."/>
            <person name="Hunt S.E."/>
            <person name="Andrews T.D."/>
            <person name="Gilbert J.G.R."/>
            <person name="Swarbreck D."/>
            <person name="Ashurst J.L."/>
            <person name="Taylor A."/>
            <person name="Battles J."/>
            <person name="Bird C.P."/>
            <person name="Ainscough R."/>
            <person name="Almeida J.P."/>
            <person name="Ashwell R.I.S."/>
            <person name="Ambrose K.D."/>
            <person name="Babbage A.K."/>
            <person name="Bagguley C.L."/>
            <person name="Bailey J."/>
            <person name="Banerjee R."/>
            <person name="Bates K."/>
            <person name="Beasley H."/>
            <person name="Bray-Allen S."/>
            <person name="Brown A.J."/>
            <person name="Brown J.Y."/>
            <person name="Burford D.C."/>
            <person name="Burrill W."/>
            <person name="Burton J."/>
            <person name="Cahill P."/>
            <person name="Camire D."/>
            <person name="Carter N.P."/>
            <person name="Chapman J.C."/>
            <person name="Clark S.Y."/>
            <person name="Clarke G."/>
            <person name="Clee C.M."/>
            <person name="Clegg S."/>
            <person name="Corby N."/>
            <person name="Coulson A."/>
            <person name="Dhami P."/>
            <person name="Dutta I."/>
            <person name="Dunn M."/>
            <person name="Faulkner L."/>
            <person name="Frankish A."/>
            <person name="Frankland J.A."/>
            <person name="Garner P."/>
            <person name="Garnett J."/>
            <person name="Gribble S."/>
            <person name="Griffiths C."/>
            <person name="Grocock R."/>
            <person name="Gustafson E."/>
            <person name="Hammond S."/>
            <person name="Harley J.L."/>
            <person name="Hart E."/>
            <person name="Heath P.D."/>
            <person name="Ho T.P."/>
            <person name="Hopkins B."/>
            <person name="Horne J."/>
            <person name="Howden P.J."/>
            <person name="Huckle E."/>
            <person name="Hynds C."/>
            <person name="Johnson C."/>
            <person name="Johnson D."/>
            <person name="Kana A."/>
            <person name="Kay M."/>
            <person name="Kimberley A.M."/>
            <person name="Kershaw J.K."/>
            <person name="Kokkinaki M."/>
            <person name="Laird G.K."/>
            <person name="Lawlor S."/>
            <person name="Lee H.M."/>
            <person name="Leongamornlert D.A."/>
            <person name="Laird G."/>
            <person name="Lloyd C."/>
            <person name="Lloyd D.M."/>
            <person name="Loveland J."/>
            <person name="Lovell J."/>
            <person name="McLaren S."/>
            <person name="McLay K.E."/>
            <person name="McMurray A."/>
            <person name="Mashreghi-Mohammadi M."/>
            <person name="Matthews L."/>
            <person name="Milne S."/>
            <person name="Nickerson T."/>
            <person name="Nguyen M."/>
            <person name="Overton-Larty E."/>
            <person name="Palmer S.A."/>
            <person name="Pearce A.V."/>
            <person name="Peck A.I."/>
            <person name="Pelan S."/>
            <person name="Phillimore B."/>
            <person name="Porter K."/>
            <person name="Rice C.M."/>
            <person name="Rogosin A."/>
            <person name="Ross M.T."/>
            <person name="Sarafidou T."/>
            <person name="Sehra H.K."/>
            <person name="Shownkeen R."/>
            <person name="Skuce C.D."/>
            <person name="Smith M."/>
            <person name="Standring L."/>
            <person name="Sycamore N."/>
            <person name="Tester J."/>
            <person name="Thorpe A."/>
            <person name="Torcasso W."/>
            <person name="Tracey A."/>
            <person name="Tromans A."/>
            <person name="Tsolas J."/>
            <person name="Wall M."/>
            <person name="Walsh J."/>
            <person name="Wang H."/>
            <person name="Weinstock K."/>
            <person name="West A.P."/>
            <person name="Willey D.L."/>
            <person name="Whitehead S.L."/>
            <person name="Wilming L."/>
            <person name="Wray P.W."/>
            <person name="Young L."/>
            <person name="Chen Y."/>
            <person name="Lovering R.C."/>
            <person name="Moschonas N.K."/>
            <person name="Siebert R."/>
            <person name="Fechtel K."/>
            <person name="Bentley D."/>
            <person name="Durbin R.M."/>
            <person name="Hubbard T."/>
            <person name="Doucette-Stamm L."/>
            <person name="Beck S."/>
            <person name="Smith D.R."/>
            <person name="Rogers J."/>
        </authorList>
    </citation>
    <scope>NUCLEOTIDE SEQUENCE [LARGE SCALE GENOMIC DNA]</scope>
    <scope>VARIANT GLN-237</scope>
</reference>
<reference key="3">
    <citation type="submission" date="2005-07" db="EMBL/GenBank/DDBJ databases">
        <authorList>
            <person name="Mural R.J."/>
            <person name="Istrail S."/>
            <person name="Sutton G.G."/>
            <person name="Florea L."/>
            <person name="Halpern A.L."/>
            <person name="Mobarry C.M."/>
            <person name="Lippert R."/>
            <person name="Walenz B."/>
            <person name="Shatkay H."/>
            <person name="Dew I."/>
            <person name="Miller J.R."/>
            <person name="Flanigan M.J."/>
            <person name="Edwards N.J."/>
            <person name="Bolanos R."/>
            <person name="Fasulo D."/>
            <person name="Halldorsson B.V."/>
            <person name="Hannenhalli S."/>
            <person name="Turner R."/>
            <person name="Yooseph S."/>
            <person name="Lu F."/>
            <person name="Nusskern D.R."/>
            <person name="Shue B.C."/>
            <person name="Zheng X.H."/>
            <person name="Zhong F."/>
            <person name="Delcher A.L."/>
            <person name="Huson D.H."/>
            <person name="Kravitz S.A."/>
            <person name="Mouchard L."/>
            <person name="Reinert K."/>
            <person name="Remington K.A."/>
            <person name="Clark A.G."/>
            <person name="Waterman M.S."/>
            <person name="Eichler E.E."/>
            <person name="Adams M.D."/>
            <person name="Hunkapiller M.W."/>
            <person name="Myers E.W."/>
            <person name="Venter J.C."/>
        </authorList>
    </citation>
    <scope>NUCLEOTIDE SEQUENCE [LARGE SCALE GENOMIC DNA]</scope>
</reference>
<reference key="4">
    <citation type="journal article" date="2004" name="Genome Res.">
        <title>The status, quality, and expansion of the NIH full-length cDNA project: the Mammalian Gene Collection (MGC).</title>
        <authorList>
            <consortium name="The MGC Project Team"/>
        </authorList>
    </citation>
    <scope>NUCLEOTIDE SEQUENCE [LARGE SCALE MRNA] (ISOFORMS 1 AND 2)</scope>
    <scope>VARIANT GLN-237</scope>
</reference>
<protein>
    <recommendedName>
        <fullName>Protein TBATA</fullName>
    </recommendedName>
    <alternativeName>
        <fullName>Protein SPATIAL</fullName>
    </alternativeName>
    <alternativeName>
        <fullName>Stromal protein associated with thymii and lymph node homolog</fullName>
    </alternativeName>
    <alternativeName>
        <fullName>Thymus, brain and testes-associated protein</fullName>
    </alternativeName>
</protein>
<gene>
    <name type="primary">TBATA</name>
    <name type="synonym">C10orf27</name>
    <name type="synonym">SPATIAL</name>
</gene>
<accession>Q96M53</accession>
<accession>A4QPA8</accession>
<accession>B2RPQ2</accession>
<accession>Q5T4G2</accession>
<feature type="chain" id="PRO_0000089786" description="Protein TBATA">
    <location>
        <begin position="1"/>
        <end position="351"/>
    </location>
</feature>
<feature type="region of interest" description="Disordered" evidence="2">
    <location>
        <begin position="16"/>
        <end position="40"/>
    </location>
</feature>
<feature type="region of interest" description="Disordered" evidence="2">
    <location>
        <begin position="167"/>
        <end position="186"/>
    </location>
</feature>
<feature type="region of interest" description="Disordered" evidence="2">
    <location>
        <begin position="195"/>
        <end position="216"/>
    </location>
</feature>
<feature type="region of interest" description="Disordered" evidence="2">
    <location>
        <begin position="292"/>
        <end position="351"/>
    </location>
</feature>
<feature type="compositionally biased region" description="Basic and acidic residues" evidence="2">
    <location>
        <begin position="167"/>
        <end position="181"/>
    </location>
</feature>
<feature type="compositionally biased region" description="Basic and acidic residues" evidence="2">
    <location>
        <begin position="292"/>
        <end position="302"/>
    </location>
</feature>
<feature type="compositionally biased region" description="Basic and acidic residues" evidence="2">
    <location>
        <begin position="340"/>
        <end position="351"/>
    </location>
</feature>
<feature type="splice variant" id="VSP_035483" description="In isoform 2." evidence="6">
    <original>VLELLCRILETDLLSAIQFW</original>
    <variation>KKTSLWDSCRQQWLSSFPSP</variation>
    <location>
        <begin position="231"/>
        <end position="250"/>
    </location>
</feature>
<feature type="splice variant" id="VSP_035484" description="In isoform 2." evidence="6">
    <location>
        <begin position="251"/>
        <end position="351"/>
    </location>
</feature>
<feature type="sequence variant" id="VAR_022998" description="In dbSNP:rs2254174." evidence="3 4 5">
    <original>R</original>
    <variation>Q</variation>
    <location>
        <position position="237"/>
    </location>
</feature>
<feature type="sequence conflict" description="In Ref. 1; BAB71459." evidence="7" ref="1">
    <original>D</original>
    <variation>G</variation>
    <location>
        <position position="9"/>
    </location>
</feature>
<evidence type="ECO:0000250" key="1"/>
<evidence type="ECO:0000256" key="2">
    <source>
        <dbReference type="SAM" id="MobiDB-lite"/>
    </source>
</evidence>
<evidence type="ECO:0000269" key="3">
    <source>
    </source>
</evidence>
<evidence type="ECO:0000269" key="4">
    <source>
    </source>
</evidence>
<evidence type="ECO:0000269" key="5">
    <source>
    </source>
</evidence>
<evidence type="ECO:0000303" key="6">
    <source>
    </source>
</evidence>
<evidence type="ECO:0000305" key="7"/>
<sequence length="351" mass="39460">MATDVQLADYPLMSPKAELKLEKKSGRKPRSPRDSGPQKELVIPGIVDFERIRRALRTPKPQTPGTYCFGRLSHHSFFSRHHPHPQHVTHIQDLTGKPVCVVRDFPAPLPESTVFSGCQMGIPTISVPIGDPQSNRNPQLSSEAWKKELKELASRVAFLTKEDELKKKEKEQKEEPLREQGAKYSAETGRLIPASTRAVGRRRSHQGQQSQSSSRHEGVQAFLLQDQELLVLELLCRILETDLLSAIQFWLLYAPPKEKDLALGLLQTAVAQLLPQPLVSIPTEKLLSQLPEVHEPPQEKQEPPCSQSPKKTKISPFTKSEKPEYIGEAQVLQMHSSQNTEKKTSKPRAES</sequence>
<proteinExistence type="evidence at protein level"/>
<organism>
    <name type="scientific">Homo sapiens</name>
    <name type="common">Human</name>
    <dbReference type="NCBI Taxonomy" id="9606"/>
    <lineage>
        <taxon>Eukaryota</taxon>
        <taxon>Metazoa</taxon>
        <taxon>Chordata</taxon>
        <taxon>Craniata</taxon>
        <taxon>Vertebrata</taxon>
        <taxon>Euteleostomi</taxon>
        <taxon>Mammalia</taxon>
        <taxon>Eutheria</taxon>
        <taxon>Euarchontoglires</taxon>
        <taxon>Primates</taxon>
        <taxon>Haplorrhini</taxon>
        <taxon>Catarrhini</taxon>
        <taxon>Hominidae</taxon>
        <taxon>Homo</taxon>
    </lineage>
</organism>
<keyword id="KW-0025">Alternative splicing</keyword>
<keyword id="KW-0963">Cytoplasm</keyword>
<keyword id="KW-0217">Developmental protein</keyword>
<keyword id="KW-0221">Differentiation</keyword>
<keyword id="KW-1267">Proteomics identification</keyword>
<keyword id="KW-1185">Reference proteome</keyword>
<keyword id="KW-0744">Spermatogenesis</keyword>
<dbReference type="EMBL" id="AK057382">
    <property type="protein sequence ID" value="BAB71459.1"/>
    <property type="molecule type" value="mRNA"/>
</dbReference>
<dbReference type="EMBL" id="AL358817">
    <property type="status" value="NOT_ANNOTATED_CDS"/>
    <property type="molecule type" value="Genomic_DNA"/>
</dbReference>
<dbReference type="EMBL" id="CH471083">
    <property type="protein sequence ID" value="EAW54411.1"/>
    <property type="molecule type" value="Genomic_DNA"/>
</dbReference>
<dbReference type="EMBL" id="BC137543">
    <property type="protein sequence ID" value="AAI37544.1"/>
    <property type="molecule type" value="mRNA"/>
</dbReference>
<dbReference type="EMBL" id="BC137544">
    <property type="protein sequence ID" value="AAI37545.1"/>
    <property type="molecule type" value="mRNA"/>
</dbReference>
<dbReference type="EMBL" id="BC139728">
    <property type="protein sequence ID" value="AAI39729.1"/>
    <property type="molecule type" value="mRNA"/>
</dbReference>
<dbReference type="CCDS" id="CCDS7308.1">
    <molecule id="Q96M53-1"/>
</dbReference>
<dbReference type="RefSeq" id="NP_001305171.1">
    <molecule id="Q96M53-1"/>
    <property type="nucleotide sequence ID" value="NM_001318242.2"/>
</dbReference>
<dbReference type="RefSeq" id="NP_689923.3">
    <molecule id="Q96M53-1"/>
    <property type="nucleotide sequence ID" value="NM_152710.4"/>
</dbReference>
<dbReference type="RefSeq" id="XP_047280678.1">
    <molecule id="Q96M53-2"/>
    <property type="nucleotide sequence ID" value="XM_047424722.1"/>
</dbReference>
<dbReference type="RefSeq" id="XP_054221006.1">
    <molecule id="Q96M53-2"/>
    <property type="nucleotide sequence ID" value="XM_054365031.1"/>
</dbReference>
<dbReference type="BioGRID" id="128577">
    <property type="interactions" value="1"/>
</dbReference>
<dbReference type="FunCoup" id="Q96M53">
    <property type="interactions" value="18"/>
</dbReference>
<dbReference type="IntAct" id="Q96M53">
    <property type="interactions" value="1"/>
</dbReference>
<dbReference type="STRING" id="9606.ENSP00000400224"/>
<dbReference type="iPTMnet" id="Q96M53"/>
<dbReference type="PhosphoSitePlus" id="Q96M53"/>
<dbReference type="BioMuta" id="TBATA"/>
<dbReference type="DMDM" id="317373509"/>
<dbReference type="MassIVE" id="Q96M53"/>
<dbReference type="PaxDb" id="9606-ENSP00000299290"/>
<dbReference type="PeptideAtlas" id="Q96M53"/>
<dbReference type="ProteomicsDB" id="77295">
    <molecule id="Q96M53-1"/>
</dbReference>
<dbReference type="Antibodypedia" id="55853">
    <property type="antibodies" value="106 antibodies from 16 providers"/>
</dbReference>
<dbReference type="DNASU" id="219793"/>
<dbReference type="Ensembl" id="ENST00000299290.5">
    <molecule id="Q96M53-1"/>
    <property type="protein sequence ID" value="ENSP00000299290.1"/>
    <property type="gene ID" value="ENSG00000166220.14"/>
</dbReference>
<dbReference type="Ensembl" id="ENST00000692183.1">
    <molecule id="Q96M53-1"/>
    <property type="protein sequence ID" value="ENSP00000509602.1"/>
    <property type="gene ID" value="ENSG00000166220.14"/>
</dbReference>
<dbReference type="Ensembl" id="ENST00000692747.1">
    <molecule id="Q96M53-2"/>
    <property type="protein sequence ID" value="ENSP00000508807.1"/>
    <property type="gene ID" value="ENSG00000166220.14"/>
</dbReference>
<dbReference type="GeneID" id="219793"/>
<dbReference type="KEGG" id="hsa:219793"/>
<dbReference type="UCSC" id="uc001jrj.1">
    <molecule id="Q96M53-1"/>
    <property type="organism name" value="human"/>
</dbReference>
<dbReference type="AGR" id="HGNC:23511"/>
<dbReference type="CTD" id="219793"/>
<dbReference type="DisGeNET" id="219793"/>
<dbReference type="GeneCards" id="TBATA"/>
<dbReference type="HGNC" id="HGNC:23511">
    <property type="gene designation" value="TBATA"/>
</dbReference>
<dbReference type="HPA" id="ENSG00000166220">
    <property type="expression patterns" value="Tissue enriched (lymphoid)"/>
</dbReference>
<dbReference type="MIM" id="612640">
    <property type="type" value="gene"/>
</dbReference>
<dbReference type="neXtProt" id="NX_Q96M53"/>
<dbReference type="OpenTargets" id="ENSG00000166220"/>
<dbReference type="PharmGKB" id="PA134924486"/>
<dbReference type="VEuPathDB" id="HostDB:ENSG00000166220"/>
<dbReference type="eggNOG" id="ENOG502RZQH">
    <property type="taxonomic scope" value="Eukaryota"/>
</dbReference>
<dbReference type="GeneTree" id="ENSGT00510000048896"/>
<dbReference type="HOGENOM" id="CLU_063592_1_0_1"/>
<dbReference type="InParanoid" id="Q96M53"/>
<dbReference type="OMA" id="VGDPQSN"/>
<dbReference type="OrthoDB" id="9982103at2759"/>
<dbReference type="PAN-GO" id="Q96M53">
    <property type="GO annotations" value="0 GO annotations based on evolutionary models"/>
</dbReference>
<dbReference type="PhylomeDB" id="Q96M53"/>
<dbReference type="TreeFam" id="TF333401"/>
<dbReference type="PathwayCommons" id="Q96M53"/>
<dbReference type="SignaLink" id="Q96M53"/>
<dbReference type="BioGRID-ORCS" id="219793">
    <property type="hits" value="17 hits in 1139 CRISPR screens"/>
</dbReference>
<dbReference type="GenomeRNAi" id="219793"/>
<dbReference type="Pharos" id="Q96M53">
    <property type="development level" value="Tbio"/>
</dbReference>
<dbReference type="PRO" id="PR:Q96M53"/>
<dbReference type="Proteomes" id="UP000005640">
    <property type="component" value="Chromosome 10"/>
</dbReference>
<dbReference type="RNAct" id="Q96M53">
    <property type="molecule type" value="protein"/>
</dbReference>
<dbReference type="Bgee" id="ENSG00000166220">
    <property type="expression patterns" value="Expressed in right testis and 68 other cell types or tissues"/>
</dbReference>
<dbReference type="ExpressionAtlas" id="Q96M53">
    <property type="expression patterns" value="baseline and differential"/>
</dbReference>
<dbReference type="GO" id="GO:0036064">
    <property type="term" value="C:ciliary basal body"/>
    <property type="evidence" value="ECO:0000314"/>
    <property type="project" value="GO_Central"/>
</dbReference>
<dbReference type="GO" id="GO:0005829">
    <property type="term" value="C:cytosol"/>
    <property type="evidence" value="ECO:0000250"/>
    <property type="project" value="UniProtKB"/>
</dbReference>
<dbReference type="GO" id="GO:0030154">
    <property type="term" value="P:cell differentiation"/>
    <property type="evidence" value="ECO:0007669"/>
    <property type="project" value="UniProtKB-KW"/>
</dbReference>
<dbReference type="GO" id="GO:0007283">
    <property type="term" value="P:spermatogenesis"/>
    <property type="evidence" value="ECO:0007669"/>
    <property type="project" value="UniProtKB-KW"/>
</dbReference>
<dbReference type="InterPro" id="IPR037394">
    <property type="entry name" value="TBATA-like"/>
</dbReference>
<dbReference type="PANTHER" id="PTHR33772:SF3">
    <property type="entry name" value="PROTEIN TBATA"/>
    <property type="match status" value="1"/>
</dbReference>
<dbReference type="PANTHER" id="PTHR33772">
    <property type="entry name" value="THYMUS, BRAIN AND TESTES-ASSOCIATED"/>
    <property type="match status" value="1"/>
</dbReference>
<dbReference type="Pfam" id="PF15256">
    <property type="entry name" value="SPATIAL"/>
    <property type="match status" value="1"/>
</dbReference>
<comment type="function">
    <text evidence="1">May play a role in spermatid differentiation. Modulates thymic stromal cell proliferation and thymus function.</text>
</comment>
<comment type="interaction">
    <interactant intactId="EBI-24203456">
        <id>Q96M53</id>
    </interactant>
    <interactant intactId="EBI-10232538">
        <id>Q8WWB5</id>
        <label>PIH1D2</label>
    </interactant>
    <organismsDiffer>false</organismsDiffer>
    <experiments>3</experiments>
</comment>
<comment type="subcellular location">
    <subcellularLocation>
        <location evidence="1">Cytoplasm</location>
        <location evidence="1">Cytosol</location>
    </subcellularLocation>
</comment>
<comment type="alternative products">
    <event type="alternative splicing"/>
    <isoform>
        <id>Q96M53-1</id>
        <name>1</name>
        <sequence type="displayed"/>
    </isoform>
    <isoform>
        <id>Q96M53-2</id>
        <name>2</name>
        <sequence type="described" ref="VSP_035483 VSP_035484"/>
    </isoform>
</comment>
<comment type="similarity">
    <text evidence="7">Belongs to the TBATA family.</text>
</comment>
<name>TBATA_HUMAN</name>